<gene>
    <name evidence="1" type="primary">bpt</name>
    <name type="synonym">ate1</name>
    <name type="ordered locus">XCC1141</name>
</gene>
<accession>Q8PBH8</accession>
<evidence type="ECO:0000255" key="1">
    <source>
        <dbReference type="HAMAP-Rule" id="MF_00689"/>
    </source>
</evidence>
<reference key="1">
    <citation type="journal article" date="2002" name="Nature">
        <title>Comparison of the genomes of two Xanthomonas pathogens with differing host specificities.</title>
        <authorList>
            <person name="da Silva A.C.R."/>
            <person name="Ferro J.A."/>
            <person name="Reinach F.C."/>
            <person name="Farah C.S."/>
            <person name="Furlan L.R."/>
            <person name="Quaggio R.B."/>
            <person name="Monteiro-Vitorello C.B."/>
            <person name="Van Sluys M.A."/>
            <person name="Almeida N.F. Jr."/>
            <person name="Alves L.M.C."/>
            <person name="do Amaral A.M."/>
            <person name="Bertolini M.C."/>
            <person name="Camargo L.E.A."/>
            <person name="Camarotte G."/>
            <person name="Cannavan F."/>
            <person name="Cardozo J."/>
            <person name="Chambergo F."/>
            <person name="Ciapina L.P."/>
            <person name="Cicarelli R.M.B."/>
            <person name="Coutinho L.L."/>
            <person name="Cursino-Santos J.R."/>
            <person name="El-Dorry H."/>
            <person name="Faria J.B."/>
            <person name="Ferreira A.J.S."/>
            <person name="Ferreira R.C.C."/>
            <person name="Ferro M.I.T."/>
            <person name="Formighieri E.F."/>
            <person name="Franco M.C."/>
            <person name="Greggio C.C."/>
            <person name="Gruber A."/>
            <person name="Katsuyama A.M."/>
            <person name="Kishi L.T."/>
            <person name="Leite R.P."/>
            <person name="Lemos E.G.M."/>
            <person name="Lemos M.V.F."/>
            <person name="Locali E.C."/>
            <person name="Machado M.A."/>
            <person name="Madeira A.M.B.N."/>
            <person name="Martinez-Rossi N.M."/>
            <person name="Martins E.C."/>
            <person name="Meidanis J."/>
            <person name="Menck C.F.M."/>
            <person name="Miyaki C.Y."/>
            <person name="Moon D.H."/>
            <person name="Moreira L.M."/>
            <person name="Novo M.T.M."/>
            <person name="Okura V.K."/>
            <person name="Oliveira M.C."/>
            <person name="Oliveira V.R."/>
            <person name="Pereira H.A."/>
            <person name="Rossi A."/>
            <person name="Sena J.A.D."/>
            <person name="Silva C."/>
            <person name="de Souza R.F."/>
            <person name="Spinola L.A.F."/>
            <person name="Takita M.A."/>
            <person name="Tamura R.E."/>
            <person name="Teixeira E.C."/>
            <person name="Tezza R.I.D."/>
            <person name="Trindade dos Santos M."/>
            <person name="Truffi D."/>
            <person name="Tsai S.M."/>
            <person name="White F.F."/>
            <person name="Setubal J.C."/>
            <person name="Kitajima J.P."/>
        </authorList>
    </citation>
    <scope>NUCLEOTIDE SEQUENCE [LARGE SCALE GENOMIC DNA]</scope>
    <source>
        <strain>ATCC 33913 / DSM 3586 / NCPPB 528 / LMG 568 / P 25</strain>
    </source>
</reference>
<comment type="function">
    <text evidence="1">Functions in the N-end rule pathway of protein degradation where it conjugates Leu from its aminoacyl-tRNA to the N-termini of proteins containing an N-terminal aspartate or glutamate.</text>
</comment>
<comment type="catalytic activity">
    <reaction evidence="1">
        <text>N-terminal L-glutamyl-[protein] + L-leucyl-tRNA(Leu) = N-terminal L-leucyl-L-glutamyl-[protein] + tRNA(Leu) + H(+)</text>
        <dbReference type="Rhea" id="RHEA:50412"/>
        <dbReference type="Rhea" id="RHEA-COMP:9613"/>
        <dbReference type="Rhea" id="RHEA-COMP:9622"/>
        <dbReference type="Rhea" id="RHEA-COMP:12664"/>
        <dbReference type="Rhea" id="RHEA-COMP:12668"/>
        <dbReference type="ChEBI" id="CHEBI:15378"/>
        <dbReference type="ChEBI" id="CHEBI:64721"/>
        <dbReference type="ChEBI" id="CHEBI:78442"/>
        <dbReference type="ChEBI" id="CHEBI:78494"/>
        <dbReference type="ChEBI" id="CHEBI:133041"/>
        <dbReference type="EC" id="2.3.2.29"/>
    </reaction>
</comment>
<comment type="catalytic activity">
    <reaction evidence="1">
        <text>N-terminal L-aspartyl-[protein] + L-leucyl-tRNA(Leu) = N-terminal L-leucyl-L-aspartyl-[protein] + tRNA(Leu) + H(+)</text>
        <dbReference type="Rhea" id="RHEA:50420"/>
        <dbReference type="Rhea" id="RHEA-COMP:9613"/>
        <dbReference type="Rhea" id="RHEA-COMP:9622"/>
        <dbReference type="Rhea" id="RHEA-COMP:12669"/>
        <dbReference type="Rhea" id="RHEA-COMP:12674"/>
        <dbReference type="ChEBI" id="CHEBI:15378"/>
        <dbReference type="ChEBI" id="CHEBI:64720"/>
        <dbReference type="ChEBI" id="CHEBI:78442"/>
        <dbReference type="ChEBI" id="CHEBI:78494"/>
        <dbReference type="ChEBI" id="CHEBI:133042"/>
        <dbReference type="EC" id="2.3.2.29"/>
    </reaction>
</comment>
<comment type="subcellular location">
    <subcellularLocation>
        <location evidence="1">Cytoplasm</location>
    </subcellularLocation>
</comment>
<comment type="similarity">
    <text evidence="1">Belongs to the R-transferase family. Bpt subfamily.</text>
</comment>
<feature type="chain" id="PRO_0000195121" description="Aspartate/glutamate leucyltransferase">
    <location>
        <begin position="1"/>
        <end position="252"/>
    </location>
</feature>
<dbReference type="EC" id="2.3.2.29" evidence="1"/>
<dbReference type="EMBL" id="AE008922">
    <property type="protein sequence ID" value="AAM40440.1"/>
    <property type="molecule type" value="Genomic_DNA"/>
</dbReference>
<dbReference type="RefSeq" id="NP_636516.1">
    <property type="nucleotide sequence ID" value="NC_003902.1"/>
</dbReference>
<dbReference type="SMR" id="Q8PBH8"/>
<dbReference type="STRING" id="190485.XCC1141"/>
<dbReference type="EnsemblBacteria" id="AAM40440">
    <property type="protein sequence ID" value="AAM40440"/>
    <property type="gene ID" value="XCC1141"/>
</dbReference>
<dbReference type="KEGG" id="xcc:XCC1141"/>
<dbReference type="PATRIC" id="fig|190485.4.peg.1220"/>
<dbReference type="eggNOG" id="COG2935">
    <property type="taxonomic scope" value="Bacteria"/>
</dbReference>
<dbReference type="HOGENOM" id="CLU_077607_0_0_6"/>
<dbReference type="OrthoDB" id="9782022at2"/>
<dbReference type="Proteomes" id="UP000001010">
    <property type="component" value="Chromosome"/>
</dbReference>
<dbReference type="GO" id="GO:0005737">
    <property type="term" value="C:cytoplasm"/>
    <property type="evidence" value="ECO:0000318"/>
    <property type="project" value="GO_Central"/>
</dbReference>
<dbReference type="GO" id="GO:0004057">
    <property type="term" value="F:arginyl-tRNA--protein transferase activity"/>
    <property type="evidence" value="ECO:0000318"/>
    <property type="project" value="GO_Central"/>
</dbReference>
<dbReference type="GO" id="GO:0008914">
    <property type="term" value="F:leucyl-tRNA--protein transferase activity"/>
    <property type="evidence" value="ECO:0007669"/>
    <property type="project" value="UniProtKB-UniRule"/>
</dbReference>
<dbReference type="GO" id="GO:0010498">
    <property type="term" value="P:proteasomal protein catabolic process"/>
    <property type="evidence" value="ECO:0000318"/>
    <property type="project" value="GO_Central"/>
</dbReference>
<dbReference type="GO" id="GO:0071596">
    <property type="term" value="P:ubiquitin-dependent protein catabolic process via the N-end rule pathway"/>
    <property type="evidence" value="ECO:0007669"/>
    <property type="project" value="InterPro"/>
</dbReference>
<dbReference type="HAMAP" id="MF_00689">
    <property type="entry name" value="Bpt"/>
    <property type="match status" value="1"/>
</dbReference>
<dbReference type="InterPro" id="IPR016181">
    <property type="entry name" value="Acyl_CoA_acyltransferase"/>
</dbReference>
<dbReference type="InterPro" id="IPR017138">
    <property type="entry name" value="Asp_Glu_LeuTrfase"/>
</dbReference>
<dbReference type="InterPro" id="IPR030700">
    <property type="entry name" value="N-end_Aminoacyl_Trfase"/>
</dbReference>
<dbReference type="InterPro" id="IPR007472">
    <property type="entry name" value="N-end_Aminoacyl_Trfase_C"/>
</dbReference>
<dbReference type="InterPro" id="IPR007471">
    <property type="entry name" value="N-end_Aminoacyl_Trfase_N"/>
</dbReference>
<dbReference type="NCBIfam" id="NF002341">
    <property type="entry name" value="PRK01305.1-1"/>
    <property type="match status" value="1"/>
</dbReference>
<dbReference type="NCBIfam" id="NF002342">
    <property type="entry name" value="PRK01305.1-3"/>
    <property type="match status" value="1"/>
</dbReference>
<dbReference type="NCBIfam" id="NF002346">
    <property type="entry name" value="PRK01305.2-3"/>
    <property type="match status" value="1"/>
</dbReference>
<dbReference type="PANTHER" id="PTHR21367">
    <property type="entry name" value="ARGININE-TRNA-PROTEIN TRANSFERASE 1"/>
    <property type="match status" value="1"/>
</dbReference>
<dbReference type="PANTHER" id="PTHR21367:SF1">
    <property type="entry name" value="ARGINYL-TRNA--PROTEIN TRANSFERASE 1"/>
    <property type="match status" value="1"/>
</dbReference>
<dbReference type="Pfam" id="PF04377">
    <property type="entry name" value="ATE_C"/>
    <property type="match status" value="1"/>
</dbReference>
<dbReference type="Pfam" id="PF04376">
    <property type="entry name" value="ATE_N"/>
    <property type="match status" value="1"/>
</dbReference>
<dbReference type="PIRSF" id="PIRSF037208">
    <property type="entry name" value="ATE_pro_prd"/>
    <property type="match status" value="1"/>
</dbReference>
<dbReference type="SUPFAM" id="SSF55729">
    <property type="entry name" value="Acyl-CoA N-acyltransferases (Nat)"/>
    <property type="match status" value="1"/>
</dbReference>
<protein>
    <recommendedName>
        <fullName evidence="1">Aspartate/glutamate leucyltransferase</fullName>
        <ecNumber evidence="1">2.3.2.29</ecNumber>
    </recommendedName>
</protein>
<sequence>MAIHADTHDDLRLFQTGEHACGYWSDRQARDLVLDPHDPRLGALYPQALAWGFRRSGDLVYRPHCERCRACVPVRIAVDAFHPDRSQRRCLARNQDLVVRVVAAERTEEQLALYRQYLQHRHPGGGMDTHGAAEFDQFLIGGWSHGRFLEIREPAVDHVPGRLLAVAVTDVTEHALSAVYTFYAPDAAARSLGTFAILEQIQWARRERRAHLYLGYWIEGHAKMNYKRRFNALEAYDGRHWRGLPAAQGSAR</sequence>
<proteinExistence type="inferred from homology"/>
<organism>
    <name type="scientific">Xanthomonas campestris pv. campestris (strain ATCC 33913 / DSM 3586 / NCPPB 528 / LMG 568 / P 25)</name>
    <dbReference type="NCBI Taxonomy" id="190485"/>
    <lineage>
        <taxon>Bacteria</taxon>
        <taxon>Pseudomonadati</taxon>
        <taxon>Pseudomonadota</taxon>
        <taxon>Gammaproteobacteria</taxon>
        <taxon>Lysobacterales</taxon>
        <taxon>Lysobacteraceae</taxon>
        <taxon>Xanthomonas</taxon>
    </lineage>
</organism>
<keyword id="KW-0012">Acyltransferase</keyword>
<keyword id="KW-0963">Cytoplasm</keyword>
<keyword id="KW-1185">Reference proteome</keyword>
<keyword id="KW-0808">Transferase</keyword>
<name>BPT_XANCP</name>